<accession>A8Z5J1</accession>
<keyword id="KW-0963">Cytoplasm</keyword>
<keyword id="KW-0378">Hydrolase</keyword>
<keyword id="KW-0645">Protease</keyword>
<keyword id="KW-0788">Thiol protease</keyword>
<comment type="function">
    <text evidence="1">Removes 5-oxoproline from various penultimate amino acid residues except L-proline.</text>
</comment>
<comment type="catalytic activity">
    <reaction evidence="1">
        <text>Release of an N-terminal pyroglutamyl group from a polypeptide, the second amino acid generally not being Pro.</text>
        <dbReference type="EC" id="3.4.19.3"/>
    </reaction>
</comment>
<comment type="subunit">
    <text evidence="1">Homotetramer.</text>
</comment>
<comment type="subcellular location">
    <subcellularLocation>
        <location evidence="1">Cytoplasm</location>
    </subcellularLocation>
</comment>
<comment type="similarity">
    <text evidence="1">Belongs to the peptidase C15 family.</text>
</comment>
<dbReference type="EC" id="3.4.19.3" evidence="1"/>
<dbReference type="EMBL" id="CP000730">
    <property type="protein sequence ID" value="ABX30678.1"/>
    <property type="molecule type" value="Genomic_DNA"/>
</dbReference>
<dbReference type="RefSeq" id="WP_000547833.1">
    <property type="nucleotide sequence ID" value="NC_010079.1"/>
</dbReference>
<dbReference type="SMR" id="A8Z5J1"/>
<dbReference type="MEROPS" id="C15.001"/>
<dbReference type="KEGG" id="sax:USA300HOU_2692"/>
<dbReference type="HOGENOM" id="CLU_043960_4_0_9"/>
<dbReference type="GO" id="GO:0005829">
    <property type="term" value="C:cytosol"/>
    <property type="evidence" value="ECO:0007669"/>
    <property type="project" value="InterPro"/>
</dbReference>
<dbReference type="GO" id="GO:0016920">
    <property type="term" value="F:pyroglutamyl-peptidase activity"/>
    <property type="evidence" value="ECO:0007669"/>
    <property type="project" value="UniProtKB-UniRule"/>
</dbReference>
<dbReference type="GO" id="GO:0006508">
    <property type="term" value="P:proteolysis"/>
    <property type="evidence" value="ECO:0007669"/>
    <property type="project" value="UniProtKB-KW"/>
</dbReference>
<dbReference type="CDD" id="cd00501">
    <property type="entry name" value="Peptidase_C15"/>
    <property type="match status" value="1"/>
</dbReference>
<dbReference type="FunFam" id="3.40.630.20:FF:000001">
    <property type="entry name" value="Pyrrolidone-carboxylate peptidase"/>
    <property type="match status" value="1"/>
</dbReference>
<dbReference type="Gene3D" id="3.40.630.20">
    <property type="entry name" value="Peptidase C15, pyroglutamyl peptidase I-like"/>
    <property type="match status" value="1"/>
</dbReference>
<dbReference type="HAMAP" id="MF_00417">
    <property type="entry name" value="Pyrrolid_peptidase"/>
    <property type="match status" value="1"/>
</dbReference>
<dbReference type="InterPro" id="IPR000816">
    <property type="entry name" value="Peptidase_C15"/>
</dbReference>
<dbReference type="InterPro" id="IPR016125">
    <property type="entry name" value="Peptidase_C15-like"/>
</dbReference>
<dbReference type="InterPro" id="IPR036440">
    <property type="entry name" value="Peptidase_C15-like_sf"/>
</dbReference>
<dbReference type="InterPro" id="IPR029762">
    <property type="entry name" value="PGP-I_bact-type"/>
</dbReference>
<dbReference type="InterPro" id="IPR033694">
    <property type="entry name" value="PGPEP1_Cys_AS"/>
</dbReference>
<dbReference type="InterPro" id="IPR033693">
    <property type="entry name" value="PGPEP1_Glu_AS"/>
</dbReference>
<dbReference type="NCBIfam" id="NF009676">
    <property type="entry name" value="PRK13197.1"/>
    <property type="match status" value="1"/>
</dbReference>
<dbReference type="NCBIfam" id="TIGR00504">
    <property type="entry name" value="pyro_pdase"/>
    <property type="match status" value="1"/>
</dbReference>
<dbReference type="PANTHER" id="PTHR23402">
    <property type="entry name" value="PROTEASE FAMILY C15 PYROGLUTAMYL-PEPTIDASE I-RELATED"/>
    <property type="match status" value="1"/>
</dbReference>
<dbReference type="PANTHER" id="PTHR23402:SF1">
    <property type="entry name" value="PYROGLUTAMYL-PEPTIDASE I"/>
    <property type="match status" value="1"/>
</dbReference>
<dbReference type="Pfam" id="PF01470">
    <property type="entry name" value="Peptidase_C15"/>
    <property type="match status" value="1"/>
</dbReference>
<dbReference type="PIRSF" id="PIRSF015592">
    <property type="entry name" value="Prld-crbxl_pptds"/>
    <property type="match status" value="1"/>
</dbReference>
<dbReference type="PRINTS" id="PR00706">
    <property type="entry name" value="PYROGLUPTASE"/>
</dbReference>
<dbReference type="SUPFAM" id="SSF53182">
    <property type="entry name" value="Pyrrolidone carboxyl peptidase (pyroglutamate aminopeptidase)"/>
    <property type="match status" value="1"/>
</dbReference>
<dbReference type="PROSITE" id="PS01334">
    <property type="entry name" value="PYRASE_CYS"/>
    <property type="match status" value="1"/>
</dbReference>
<dbReference type="PROSITE" id="PS01333">
    <property type="entry name" value="PYRASE_GLU"/>
    <property type="match status" value="1"/>
</dbReference>
<gene>
    <name evidence="1" type="primary">pcp</name>
    <name type="ordered locus">USA300HOU_2692</name>
</gene>
<evidence type="ECO:0000255" key="1">
    <source>
        <dbReference type="HAMAP-Rule" id="MF_00417"/>
    </source>
</evidence>
<sequence>MHILVTGFAPFDNQNINPSWEAVTQLEDIIGTHTIDKLKLPTSFKKVDNIINKTLASNHYDVVLAIGQAGGRNAITPERVAINIDDARIPDNDDFQPIDQAIHLDGAPAYFSNLPVKAMTQSIINQGLPGALSNSAGTFVCNHTLYHLGYLQDKHYPHLRFGFIHVPYIPEQVIGKPDTPSMPLEKIVAGLTAAIEAISNDEDLHLALGTTE</sequence>
<name>PCP_STAAT</name>
<feature type="chain" id="PRO_1000080517" description="Pyrrolidone-carboxylate peptidase">
    <location>
        <begin position="1"/>
        <end position="212"/>
    </location>
</feature>
<feature type="active site" evidence="1">
    <location>
        <position position="78"/>
    </location>
</feature>
<feature type="active site" evidence="1">
    <location>
        <position position="141"/>
    </location>
</feature>
<feature type="active site" evidence="1">
    <location>
        <position position="165"/>
    </location>
</feature>
<reference key="1">
    <citation type="journal article" date="2007" name="BMC Microbiol.">
        <title>Subtle genetic changes enhance virulence of methicillin resistant and sensitive Staphylococcus aureus.</title>
        <authorList>
            <person name="Highlander S.K."/>
            <person name="Hulten K.G."/>
            <person name="Qin X."/>
            <person name="Jiang H."/>
            <person name="Yerrapragada S."/>
            <person name="Mason E.O. Jr."/>
            <person name="Shang Y."/>
            <person name="Williams T.M."/>
            <person name="Fortunov R.M."/>
            <person name="Liu Y."/>
            <person name="Igboeli O."/>
            <person name="Petrosino J."/>
            <person name="Tirumalai M."/>
            <person name="Uzman A."/>
            <person name="Fox G.E."/>
            <person name="Cardenas A.M."/>
            <person name="Muzny D.M."/>
            <person name="Hemphill L."/>
            <person name="Ding Y."/>
            <person name="Dugan S."/>
            <person name="Blyth P.R."/>
            <person name="Buhay C.J."/>
            <person name="Dinh H.H."/>
            <person name="Hawes A.C."/>
            <person name="Holder M."/>
            <person name="Kovar C.L."/>
            <person name="Lee S.L."/>
            <person name="Liu W."/>
            <person name="Nazareth L.V."/>
            <person name="Wang Q."/>
            <person name="Zhou J."/>
            <person name="Kaplan S.L."/>
            <person name="Weinstock G.M."/>
        </authorList>
    </citation>
    <scope>NUCLEOTIDE SEQUENCE [LARGE SCALE GENOMIC DNA]</scope>
    <source>
        <strain>USA300 / TCH1516</strain>
    </source>
</reference>
<organism>
    <name type="scientific">Staphylococcus aureus (strain USA300 / TCH1516)</name>
    <dbReference type="NCBI Taxonomy" id="451516"/>
    <lineage>
        <taxon>Bacteria</taxon>
        <taxon>Bacillati</taxon>
        <taxon>Bacillota</taxon>
        <taxon>Bacilli</taxon>
        <taxon>Bacillales</taxon>
        <taxon>Staphylococcaceae</taxon>
        <taxon>Staphylococcus</taxon>
    </lineage>
</organism>
<protein>
    <recommendedName>
        <fullName evidence="1">Pyrrolidone-carboxylate peptidase</fullName>
        <ecNumber evidence="1">3.4.19.3</ecNumber>
    </recommendedName>
    <alternativeName>
        <fullName evidence="1">5-oxoprolyl-peptidase</fullName>
    </alternativeName>
    <alternativeName>
        <fullName evidence="1">Pyroglutamyl-peptidase I</fullName>
        <shortName evidence="1">PGP-I</shortName>
        <shortName evidence="1">Pyrase</shortName>
    </alternativeName>
</protein>
<proteinExistence type="inferred from homology"/>